<reference key="1">
    <citation type="submission" date="2006-12" db="EMBL/GenBank/DDBJ databases">
        <title>Complete sequence of chromosome 1 of Acidovorax sp. JS42.</title>
        <authorList>
            <person name="Copeland A."/>
            <person name="Lucas S."/>
            <person name="Lapidus A."/>
            <person name="Barry K."/>
            <person name="Detter J.C."/>
            <person name="Glavina del Rio T."/>
            <person name="Dalin E."/>
            <person name="Tice H."/>
            <person name="Pitluck S."/>
            <person name="Chertkov O."/>
            <person name="Brettin T."/>
            <person name="Bruce D."/>
            <person name="Han C."/>
            <person name="Tapia R."/>
            <person name="Gilna P."/>
            <person name="Schmutz J."/>
            <person name="Larimer F."/>
            <person name="Land M."/>
            <person name="Hauser L."/>
            <person name="Kyrpides N."/>
            <person name="Kim E."/>
            <person name="Stahl D."/>
            <person name="Richardson P."/>
        </authorList>
    </citation>
    <scope>NUCLEOTIDE SEQUENCE [LARGE SCALE GENOMIC DNA]</scope>
    <source>
        <strain>JS42</strain>
    </source>
</reference>
<evidence type="ECO:0000255" key="1">
    <source>
        <dbReference type="HAMAP-Rule" id="MF_00254"/>
    </source>
</evidence>
<dbReference type="EC" id="6.1.1.14" evidence="1"/>
<dbReference type="EMBL" id="CP000539">
    <property type="protein sequence ID" value="ABM40777.1"/>
    <property type="molecule type" value="Genomic_DNA"/>
</dbReference>
<dbReference type="SMR" id="A1W3F2"/>
<dbReference type="STRING" id="232721.Ajs_0527"/>
<dbReference type="KEGG" id="ajs:Ajs_0527"/>
<dbReference type="eggNOG" id="COG0752">
    <property type="taxonomic scope" value="Bacteria"/>
</dbReference>
<dbReference type="HOGENOM" id="CLU_057066_1_0_4"/>
<dbReference type="Proteomes" id="UP000000645">
    <property type="component" value="Chromosome"/>
</dbReference>
<dbReference type="GO" id="GO:0005829">
    <property type="term" value="C:cytosol"/>
    <property type="evidence" value="ECO:0007669"/>
    <property type="project" value="TreeGrafter"/>
</dbReference>
<dbReference type="GO" id="GO:0005524">
    <property type="term" value="F:ATP binding"/>
    <property type="evidence" value="ECO:0007669"/>
    <property type="project" value="UniProtKB-UniRule"/>
</dbReference>
<dbReference type="GO" id="GO:0004820">
    <property type="term" value="F:glycine-tRNA ligase activity"/>
    <property type="evidence" value="ECO:0007669"/>
    <property type="project" value="UniProtKB-UniRule"/>
</dbReference>
<dbReference type="GO" id="GO:0006426">
    <property type="term" value="P:glycyl-tRNA aminoacylation"/>
    <property type="evidence" value="ECO:0007669"/>
    <property type="project" value="UniProtKB-UniRule"/>
</dbReference>
<dbReference type="CDD" id="cd00733">
    <property type="entry name" value="GlyRS_alpha_core"/>
    <property type="match status" value="1"/>
</dbReference>
<dbReference type="FunFam" id="3.30.930.10:FF:000006">
    <property type="entry name" value="Glycine--tRNA ligase alpha subunit"/>
    <property type="match status" value="1"/>
</dbReference>
<dbReference type="Gene3D" id="3.30.930.10">
    <property type="entry name" value="Bira Bifunctional Protein, Domain 2"/>
    <property type="match status" value="1"/>
</dbReference>
<dbReference type="Gene3D" id="1.20.58.180">
    <property type="entry name" value="Class II aaRS and biotin synthetases, domain 2"/>
    <property type="match status" value="1"/>
</dbReference>
<dbReference type="HAMAP" id="MF_00254">
    <property type="entry name" value="Gly_tRNA_synth_alpha"/>
    <property type="match status" value="1"/>
</dbReference>
<dbReference type="InterPro" id="IPR045864">
    <property type="entry name" value="aa-tRNA-synth_II/BPL/LPL"/>
</dbReference>
<dbReference type="InterPro" id="IPR006194">
    <property type="entry name" value="Gly-tRNA-synth_heterodimer"/>
</dbReference>
<dbReference type="InterPro" id="IPR002310">
    <property type="entry name" value="Gly-tRNA_ligase_asu"/>
</dbReference>
<dbReference type="NCBIfam" id="TIGR00388">
    <property type="entry name" value="glyQ"/>
    <property type="match status" value="1"/>
</dbReference>
<dbReference type="NCBIfam" id="NF006827">
    <property type="entry name" value="PRK09348.1"/>
    <property type="match status" value="1"/>
</dbReference>
<dbReference type="PANTHER" id="PTHR30075:SF2">
    <property type="entry name" value="GLYCINE--TRNA LIGASE, CHLOROPLASTIC_MITOCHONDRIAL 2"/>
    <property type="match status" value="1"/>
</dbReference>
<dbReference type="PANTHER" id="PTHR30075">
    <property type="entry name" value="GLYCYL-TRNA SYNTHETASE"/>
    <property type="match status" value="1"/>
</dbReference>
<dbReference type="Pfam" id="PF02091">
    <property type="entry name" value="tRNA-synt_2e"/>
    <property type="match status" value="1"/>
</dbReference>
<dbReference type="PRINTS" id="PR01044">
    <property type="entry name" value="TRNASYNTHGA"/>
</dbReference>
<dbReference type="SUPFAM" id="SSF55681">
    <property type="entry name" value="Class II aaRS and biotin synthetases"/>
    <property type="match status" value="1"/>
</dbReference>
<dbReference type="PROSITE" id="PS50861">
    <property type="entry name" value="AA_TRNA_LIGASE_II_GLYAB"/>
    <property type="match status" value="1"/>
</dbReference>
<keyword id="KW-0030">Aminoacyl-tRNA synthetase</keyword>
<keyword id="KW-0067">ATP-binding</keyword>
<keyword id="KW-0963">Cytoplasm</keyword>
<keyword id="KW-0436">Ligase</keyword>
<keyword id="KW-0547">Nucleotide-binding</keyword>
<keyword id="KW-0648">Protein biosynthesis</keyword>
<sequence>MLTFQQIILKLQSYWADQGCALLQPYDMEVGAGTSHTATFLRALGPEPWKAAYVQPSRRPKDGRYGENPNRLQHYYQYQVVLKPAPDNILELYLGSLEALGFDLKKNDIRFVEDDWENPTLGAWGLGWEVWLNGMEVTQFTYFQQVGGIDCKPATGEITYGLERLAMYLQGVDNVYNLTWTEGPNGAKLTYGDVYHQNEVEQSTYNFEHSDAEFLFTAFGAHEKQANHLMGEQLALPAYEQVLKAAHTFNLLDARGAISVTERAAYIGRIRNLARAVAKAYLDSRARLGFPMAPKAHADEVLAELAKAAEQQNKKAA</sequence>
<organism>
    <name type="scientific">Acidovorax sp. (strain JS42)</name>
    <dbReference type="NCBI Taxonomy" id="232721"/>
    <lineage>
        <taxon>Bacteria</taxon>
        <taxon>Pseudomonadati</taxon>
        <taxon>Pseudomonadota</taxon>
        <taxon>Betaproteobacteria</taxon>
        <taxon>Burkholderiales</taxon>
        <taxon>Comamonadaceae</taxon>
        <taxon>Acidovorax</taxon>
    </lineage>
</organism>
<feature type="chain" id="PRO_1000047391" description="Glycine--tRNA ligase alpha subunit">
    <location>
        <begin position="1"/>
        <end position="317"/>
    </location>
</feature>
<gene>
    <name evidence="1" type="primary">glyQ</name>
    <name type="ordered locus">Ajs_0527</name>
</gene>
<name>SYGA_ACISJ</name>
<comment type="catalytic activity">
    <reaction evidence="1">
        <text>tRNA(Gly) + glycine + ATP = glycyl-tRNA(Gly) + AMP + diphosphate</text>
        <dbReference type="Rhea" id="RHEA:16013"/>
        <dbReference type="Rhea" id="RHEA-COMP:9664"/>
        <dbReference type="Rhea" id="RHEA-COMP:9683"/>
        <dbReference type="ChEBI" id="CHEBI:30616"/>
        <dbReference type="ChEBI" id="CHEBI:33019"/>
        <dbReference type="ChEBI" id="CHEBI:57305"/>
        <dbReference type="ChEBI" id="CHEBI:78442"/>
        <dbReference type="ChEBI" id="CHEBI:78522"/>
        <dbReference type="ChEBI" id="CHEBI:456215"/>
        <dbReference type="EC" id="6.1.1.14"/>
    </reaction>
</comment>
<comment type="subunit">
    <text evidence="1">Tetramer of two alpha and two beta subunits.</text>
</comment>
<comment type="subcellular location">
    <subcellularLocation>
        <location evidence="1">Cytoplasm</location>
    </subcellularLocation>
</comment>
<comment type="similarity">
    <text evidence="1">Belongs to the class-II aminoacyl-tRNA synthetase family.</text>
</comment>
<accession>A1W3F2</accession>
<protein>
    <recommendedName>
        <fullName evidence="1">Glycine--tRNA ligase alpha subunit</fullName>
        <ecNumber evidence="1">6.1.1.14</ecNumber>
    </recommendedName>
    <alternativeName>
        <fullName evidence="1">Glycyl-tRNA synthetase alpha subunit</fullName>
        <shortName evidence="1">GlyRS</shortName>
    </alternativeName>
</protein>
<proteinExistence type="inferred from homology"/>